<sequence length="524" mass="57545">MAGLLSTFDTFSSRRSESINKSGGGAIIPGQRSTVSVFILGPSVTDDADKLLIATTFLAHSLDTDKQHSQRGGFLVSLLAMAIRSPELYLTTNGVNADVKYVIYNIERDPKRTKTDGFIVKTRDMEYERTTEWLFGPMINKNPLFQGQRENADLEALLQTYGYPACLGAIIVQVWIVLVKAITSSAGLRKGFFNRLEAFRQDGTVKSALVFTGDTVEGIGAVMRSQQSLVSLMVETLVTMNTSRSDLTTLEKNIQIVGNYIRDAGLASFMNTIKYGVETKMAALTLSNLRPDINKLRSLVDIYLSKGARAPFICILRDPVHGEFAPGNYPALWSYAMGVAVVQNKAMQQYVTGRTYLDMEMFLLGQAVAKDADSKISSALEEELNVTDTAKERLRHHLTNLSGGDGAYHKPTGGGAIEVAIDHTDITFGAEDTADRDNKNWTNNSNERWSNHSINNHTITISGAEQLEEETNDEDITDIENKIARRLADKKQRLSQANNKQDANSDADYENDDDATAAAGIGGI</sequence>
<keyword id="KW-0002">3D-structure</keyword>
<keyword id="KW-0167">Capsid protein</keyword>
<keyword id="KW-1139">Helical capsid protein</keyword>
<keyword id="KW-1035">Host cytoplasm</keyword>
<keyword id="KW-0687">Ribonucleoprotein</keyword>
<keyword id="KW-0694">RNA-binding</keyword>
<keyword id="KW-0543">Viral nucleoprotein</keyword>
<keyword id="KW-0946">Virion</keyword>
<feature type="chain" id="PRO_0000142673" description="Nucleoprotein">
    <location>
        <begin position="1"/>
        <end position="524"/>
    </location>
</feature>
<feature type="region of interest" description="Ncore" evidence="2">
    <location>
        <begin position="1"/>
        <end position="404"/>
    </location>
</feature>
<feature type="region of interest" description="Ntail" evidence="2">
    <location>
        <begin position="405"/>
        <end position="524"/>
    </location>
</feature>
<feature type="region of interest" description="Homomultimerization" evidence="3">
    <location>
        <begin position="440"/>
        <end position="461"/>
    </location>
</feature>
<feature type="region of interest" description="Interaction with the phosphoprotein" evidence="3">
    <location>
        <begin position="462"/>
        <end position="471"/>
    </location>
</feature>
<feature type="region of interest" description="Disordered" evidence="4">
    <location>
        <begin position="489"/>
        <end position="524"/>
    </location>
</feature>
<feature type="compositionally biased region" description="Polar residues" evidence="4">
    <location>
        <begin position="494"/>
        <end position="504"/>
    </location>
</feature>
<feature type="compositionally biased region" description="Acidic residues" evidence="4">
    <location>
        <begin position="505"/>
        <end position="515"/>
    </location>
</feature>
<feature type="binding site" evidence="1">
    <location>
        <position position="180"/>
    </location>
    <ligand>
        <name>RNA</name>
        <dbReference type="ChEBI" id="CHEBI:33697"/>
    </ligand>
</feature>
<feature type="binding site" evidence="1">
    <location>
        <position position="190"/>
    </location>
    <ligand>
        <name>RNA</name>
        <dbReference type="ChEBI" id="CHEBI:33697"/>
    </ligand>
</feature>
<feature type="binding site" evidence="1">
    <location>
        <position position="195"/>
    </location>
    <ligand>
        <name>RNA</name>
        <dbReference type="ChEBI" id="CHEBI:33697"/>
    </ligand>
</feature>
<feature type="binding site" evidence="1">
    <location>
        <position position="260"/>
    </location>
    <ligand>
        <name>RNA</name>
        <dbReference type="ChEBI" id="CHEBI:33697"/>
    </ligand>
</feature>
<feature type="binding site" evidence="1">
    <location>
        <position position="350"/>
    </location>
    <ligand>
        <name>RNA</name>
        <dbReference type="ChEBI" id="CHEBI:33697"/>
    </ligand>
</feature>
<feature type="binding site" evidence="1">
    <location>
        <position position="354"/>
    </location>
    <ligand>
        <name>RNA</name>
        <dbReference type="ChEBI" id="CHEBI:33697"/>
    </ligand>
</feature>
<name>NCAP_PI1HW</name>
<comment type="function">
    <text evidence="2 3">Forms the helical nucleocapsid (NC) in a ratio of 1 N per 6 ribonucleotides, protecting the genome from nucleases (By similarity). The encapsidated genomic RNA serves as template for transcription and replication; encapsidation by N is coupled to RNA synthesis. Forms the encapsidation complex with the phosphoprotein protein P. Before encapsidation, the newly synthesized free N protein, so-called N0, is chaperoned by P (By similarity).</text>
</comment>
<comment type="subunit">
    <text evidence="1 2 3">Homomultimer; forms the nucleocapsid (By similarity). Binds to the viral genomic RNA (By similarity). N0 interacts with the phosphoprotein (via N-terminus); this interaction allows P to chaperon N0 to avoid N polymerization before encapsidation (By similarity). Interacts as N-RNA template with the phosphoprotein (via C-terminus); this interaction positions the polymerase on the template (By similarity).</text>
</comment>
<comment type="subcellular location">
    <subcellularLocation>
        <location evidence="5">Virion</location>
    </subcellularLocation>
    <subcellularLocation>
        <location>Host cytoplasm</location>
    </subcellularLocation>
</comment>
<comment type="domain">
    <text evidence="2">Ncore is globular and carries regions required for self-assembly and RNA-binding. Ntail is an intrinsically disordered monomeric domain in the C-terminus.</text>
</comment>
<comment type="similarity">
    <text evidence="5">Belongs to the paramyxoviruses nucleocapsid family.</text>
</comment>
<evidence type="ECO:0000250" key="1">
    <source>
        <dbReference type="UniProtKB" id="O57286"/>
    </source>
</evidence>
<evidence type="ECO:0000250" key="2">
    <source>
        <dbReference type="UniProtKB" id="P06159"/>
    </source>
</evidence>
<evidence type="ECO:0000250" key="3">
    <source>
        <dbReference type="UniProtKB" id="Q07097"/>
    </source>
</evidence>
<evidence type="ECO:0000256" key="4">
    <source>
        <dbReference type="SAM" id="MobiDB-lite"/>
    </source>
</evidence>
<evidence type="ECO:0000305" key="5"/>
<accession>P26590</accession>
<protein>
    <recommendedName>
        <fullName>Nucleoprotein</fullName>
    </recommendedName>
    <alternativeName>
        <fullName>Nucleocapsid protein</fullName>
        <shortName>NP</shortName>
        <shortName>Protein N</shortName>
    </alternativeName>
</protein>
<organism>
    <name type="scientific">Human parainfluenza 1 virus (strain Washington/1957)</name>
    <name type="common">HPIV-1</name>
    <dbReference type="NCBI Taxonomy" id="11211"/>
    <lineage>
        <taxon>Viruses</taxon>
        <taxon>Riboviria</taxon>
        <taxon>Orthornavirae</taxon>
        <taxon>Negarnaviricota</taxon>
        <taxon>Haploviricotina</taxon>
        <taxon>Monjiviricetes</taxon>
        <taxon>Mononegavirales</taxon>
        <taxon>Paramyxoviridae</taxon>
        <taxon>Feraresvirinae</taxon>
        <taxon>Respirovirus</taxon>
        <taxon>Respirovirus laryngotracheitidis</taxon>
    </lineage>
</organism>
<dbReference type="EMBL" id="D01070">
    <property type="protein sequence ID" value="BAA00873.1"/>
    <property type="molecule type" value="mRNA"/>
</dbReference>
<dbReference type="PIR" id="A38401">
    <property type="entry name" value="VHNZT1"/>
</dbReference>
<dbReference type="PDB" id="2CII">
    <property type="method" value="X-ray"/>
    <property type="resolution" value="2.55 A"/>
    <property type="chains" value="C=324-332"/>
</dbReference>
<dbReference type="PDBsum" id="2CII"/>
<dbReference type="SMR" id="P26590"/>
<dbReference type="EvolutionaryTrace" id="P26590"/>
<dbReference type="GO" id="GO:0019029">
    <property type="term" value="C:helical viral capsid"/>
    <property type="evidence" value="ECO:0007669"/>
    <property type="project" value="UniProtKB-KW"/>
</dbReference>
<dbReference type="GO" id="GO:0030430">
    <property type="term" value="C:host cell cytoplasm"/>
    <property type="evidence" value="ECO:0007669"/>
    <property type="project" value="UniProtKB-SubCell"/>
</dbReference>
<dbReference type="GO" id="GO:1990904">
    <property type="term" value="C:ribonucleoprotein complex"/>
    <property type="evidence" value="ECO:0007669"/>
    <property type="project" value="UniProtKB-KW"/>
</dbReference>
<dbReference type="GO" id="GO:0019013">
    <property type="term" value="C:viral nucleocapsid"/>
    <property type="evidence" value="ECO:0007669"/>
    <property type="project" value="UniProtKB-KW"/>
</dbReference>
<dbReference type="GO" id="GO:0003723">
    <property type="term" value="F:RNA binding"/>
    <property type="evidence" value="ECO:0007669"/>
    <property type="project" value="UniProtKB-KW"/>
</dbReference>
<dbReference type="GO" id="GO:0005198">
    <property type="term" value="F:structural molecule activity"/>
    <property type="evidence" value="ECO:0007669"/>
    <property type="project" value="InterPro"/>
</dbReference>
<dbReference type="InterPro" id="IPR002021">
    <property type="entry name" value="Paramyx_ncap"/>
</dbReference>
<dbReference type="Pfam" id="PF00973">
    <property type="entry name" value="Paramyxo_ncap"/>
    <property type="match status" value="1"/>
</dbReference>
<gene>
    <name type="primary">N</name>
    <name type="synonym">NP</name>
</gene>
<reference key="1">
    <citation type="journal article" date="1991" name="J. Gen. Virol.">
        <title>The nucleoproteins of human parainfluenza virus type 1 and Sendai virus share amino acid sequences and antigenic and structural determinants.</title>
        <authorList>
            <person name="Lyn D."/>
            <person name="Gill D.S."/>
            <person name="Scroggs R.A."/>
            <person name="Portner A."/>
        </authorList>
    </citation>
    <scope>NUCLEOTIDE SEQUENCE [MRNA]</scope>
</reference>
<organismHost>
    <name type="scientific">Homo sapiens</name>
    <name type="common">Human</name>
    <dbReference type="NCBI Taxonomy" id="9606"/>
</organismHost>
<proteinExistence type="evidence at protein level"/>